<organism>
    <name type="scientific">Listeria monocytogenes serotype 4b (strain F2365)</name>
    <dbReference type="NCBI Taxonomy" id="265669"/>
    <lineage>
        <taxon>Bacteria</taxon>
        <taxon>Bacillati</taxon>
        <taxon>Bacillota</taxon>
        <taxon>Bacilli</taxon>
        <taxon>Bacillales</taxon>
        <taxon>Listeriaceae</taxon>
        <taxon>Listeria</taxon>
    </lineage>
</organism>
<name>DXR_LISMF</name>
<comment type="function">
    <text evidence="1">Catalyzes the NADPH-dependent rearrangement and reduction of 1-deoxy-D-xylulose-5-phosphate (DXP) to 2-C-methyl-D-erythritol 4-phosphate (MEP).</text>
</comment>
<comment type="catalytic activity">
    <reaction evidence="1">
        <text>2-C-methyl-D-erythritol 4-phosphate + NADP(+) = 1-deoxy-D-xylulose 5-phosphate + NADPH + H(+)</text>
        <dbReference type="Rhea" id="RHEA:13717"/>
        <dbReference type="ChEBI" id="CHEBI:15378"/>
        <dbReference type="ChEBI" id="CHEBI:57783"/>
        <dbReference type="ChEBI" id="CHEBI:57792"/>
        <dbReference type="ChEBI" id="CHEBI:58262"/>
        <dbReference type="ChEBI" id="CHEBI:58349"/>
        <dbReference type="EC" id="1.1.1.267"/>
    </reaction>
    <physiologicalReaction direction="right-to-left" evidence="1">
        <dbReference type="Rhea" id="RHEA:13719"/>
    </physiologicalReaction>
</comment>
<comment type="cofactor">
    <cofactor evidence="1">
        <name>Mg(2+)</name>
        <dbReference type="ChEBI" id="CHEBI:18420"/>
    </cofactor>
    <cofactor evidence="1">
        <name>Mn(2+)</name>
        <dbReference type="ChEBI" id="CHEBI:29035"/>
    </cofactor>
</comment>
<comment type="pathway">
    <text evidence="1">Isoprenoid biosynthesis; isopentenyl diphosphate biosynthesis via DXP pathway; isopentenyl diphosphate from 1-deoxy-D-xylulose 5-phosphate: step 1/6.</text>
</comment>
<comment type="similarity">
    <text evidence="1">Belongs to the DXR family.</text>
</comment>
<gene>
    <name evidence="1" type="primary">dxr</name>
    <name type="ordered locus">LMOf2365_1334</name>
</gene>
<keyword id="KW-0414">Isoprene biosynthesis</keyword>
<keyword id="KW-0464">Manganese</keyword>
<keyword id="KW-0479">Metal-binding</keyword>
<keyword id="KW-0521">NADP</keyword>
<keyword id="KW-0560">Oxidoreductase</keyword>
<evidence type="ECO:0000255" key="1">
    <source>
        <dbReference type="HAMAP-Rule" id="MF_00183"/>
    </source>
</evidence>
<sequence>MKKIILLGATGSIGTQTLAIIRENPEKFQIVALSFGRNMERGRAIIKEFKPKMVAVWHTRDRVILEAEFPNVKFFNGLEGLREVATYLDGDVLLNAVMGSVGLLPTLDAIEAGKAIAIANKETLVTAGHLVMRAAKEKNISLLPVDSEHSAILQALNGENTERIEKLVLTASGGSFRDKTREQLSEVTVKEALKHPNWNMGNKLTIDSATMFNKGLEVMEAHWLFGVDYDDIEVVIQRESIIHSMVQFVDGSFIAQLGTPDMRMPIQYALTYPDRLYIPYEKEFRITDFSALHFEKVDYERFPALKLAYNAGKIGGTMPTVLNAANEIAVAGFLNGQVAFYNIEALVENAMNRHTSISDPDLDTILQVDQETRAYVKTLL</sequence>
<accession>Q720A5</accession>
<reference key="1">
    <citation type="journal article" date="2004" name="Nucleic Acids Res.">
        <title>Whole genome comparisons of serotype 4b and 1/2a strains of the food-borne pathogen Listeria monocytogenes reveal new insights into the core genome components of this species.</title>
        <authorList>
            <person name="Nelson K.E."/>
            <person name="Fouts D.E."/>
            <person name="Mongodin E.F."/>
            <person name="Ravel J."/>
            <person name="DeBoy R.T."/>
            <person name="Kolonay J.F."/>
            <person name="Rasko D.A."/>
            <person name="Angiuoli S.V."/>
            <person name="Gill S.R."/>
            <person name="Paulsen I.T."/>
            <person name="Peterson J.D."/>
            <person name="White O."/>
            <person name="Nelson W.C."/>
            <person name="Nierman W.C."/>
            <person name="Beanan M.J."/>
            <person name="Brinkac L.M."/>
            <person name="Daugherty S.C."/>
            <person name="Dodson R.J."/>
            <person name="Durkin A.S."/>
            <person name="Madupu R."/>
            <person name="Haft D.H."/>
            <person name="Selengut J."/>
            <person name="Van Aken S.E."/>
            <person name="Khouri H.M."/>
            <person name="Fedorova N."/>
            <person name="Forberger H.A."/>
            <person name="Tran B."/>
            <person name="Kathariou S."/>
            <person name="Wonderling L.D."/>
            <person name="Uhlich G.A."/>
            <person name="Bayles D.O."/>
            <person name="Luchansky J.B."/>
            <person name="Fraser C.M."/>
        </authorList>
    </citation>
    <scope>NUCLEOTIDE SEQUENCE [LARGE SCALE GENOMIC DNA]</scope>
    <source>
        <strain>F2365</strain>
    </source>
</reference>
<feature type="chain" id="PRO_0000163672" description="1-deoxy-D-xylulose 5-phosphate reductoisomerase">
    <location>
        <begin position="1"/>
        <end position="380"/>
    </location>
</feature>
<feature type="binding site" evidence="1">
    <location>
        <position position="10"/>
    </location>
    <ligand>
        <name>NADPH</name>
        <dbReference type="ChEBI" id="CHEBI:57783"/>
    </ligand>
</feature>
<feature type="binding site" evidence="1">
    <location>
        <position position="11"/>
    </location>
    <ligand>
        <name>NADPH</name>
        <dbReference type="ChEBI" id="CHEBI:57783"/>
    </ligand>
</feature>
<feature type="binding site" evidence="1">
    <location>
        <position position="12"/>
    </location>
    <ligand>
        <name>NADPH</name>
        <dbReference type="ChEBI" id="CHEBI:57783"/>
    </ligand>
</feature>
<feature type="binding site" evidence="1">
    <location>
        <position position="13"/>
    </location>
    <ligand>
        <name>NADPH</name>
        <dbReference type="ChEBI" id="CHEBI:57783"/>
    </ligand>
</feature>
<feature type="binding site" evidence="1">
    <location>
        <position position="36"/>
    </location>
    <ligand>
        <name>NADPH</name>
        <dbReference type="ChEBI" id="CHEBI:57783"/>
    </ligand>
</feature>
<feature type="binding site" evidence="1">
    <location>
        <position position="37"/>
    </location>
    <ligand>
        <name>NADPH</name>
        <dbReference type="ChEBI" id="CHEBI:57783"/>
    </ligand>
</feature>
<feature type="binding site" evidence="1">
    <location>
        <position position="38"/>
    </location>
    <ligand>
        <name>NADPH</name>
        <dbReference type="ChEBI" id="CHEBI:57783"/>
    </ligand>
</feature>
<feature type="binding site" evidence="1">
    <location>
        <position position="120"/>
    </location>
    <ligand>
        <name>NADPH</name>
        <dbReference type="ChEBI" id="CHEBI:57783"/>
    </ligand>
</feature>
<feature type="binding site" evidence="1">
    <location>
        <position position="121"/>
    </location>
    <ligand>
        <name>1-deoxy-D-xylulose 5-phosphate</name>
        <dbReference type="ChEBI" id="CHEBI:57792"/>
    </ligand>
</feature>
<feature type="binding site" evidence="1">
    <location>
        <position position="122"/>
    </location>
    <ligand>
        <name>NADPH</name>
        <dbReference type="ChEBI" id="CHEBI:57783"/>
    </ligand>
</feature>
<feature type="binding site" evidence="1">
    <location>
        <position position="146"/>
    </location>
    <ligand>
        <name>Mn(2+)</name>
        <dbReference type="ChEBI" id="CHEBI:29035"/>
    </ligand>
</feature>
<feature type="binding site" evidence="1">
    <location>
        <position position="147"/>
    </location>
    <ligand>
        <name>1-deoxy-D-xylulose 5-phosphate</name>
        <dbReference type="ChEBI" id="CHEBI:57792"/>
    </ligand>
</feature>
<feature type="binding site" evidence="1">
    <location>
        <position position="148"/>
    </location>
    <ligand>
        <name>1-deoxy-D-xylulose 5-phosphate</name>
        <dbReference type="ChEBI" id="CHEBI:57792"/>
    </ligand>
</feature>
<feature type="binding site" evidence="1">
    <location>
        <position position="148"/>
    </location>
    <ligand>
        <name>Mn(2+)</name>
        <dbReference type="ChEBI" id="CHEBI:29035"/>
    </ligand>
</feature>
<feature type="binding site" evidence="1">
    <location>
        <position position="172"/>
    </location>
    <ligand>
        <name>1-deoxy-D-xylulose 5-phosphate</name>
        <dbReference type="ChEBI" id="CHEBI:57792"/>
    </ligand>
</feature>
<feature type="binding site" evidence="1">
    <location>
        <position position="195"/>
    </location>
    <ligand>
        <name>1-deoxy-D-xylulose 5-phosphate</name>
        <dbReference type="ChEBI" id="CHEBI:57792"/>
    </ligand>
</feature>
<feature type="binding site" evidence="1">
    <location>
        <position position="201"/>
    </location>
    <ligand>
        <name>NADPH</name>
        <dbReference type="ChEBI" id="CHEBI:57783"/>
    </ligand>
</feature>
<feature type="binding site" evidence="1">
    <location>
        <position position="208"/>
    </location>
    <ligand>
        <name>1-deoxy-D-xylulose 5-phosphate</name>
        <dbReference type="ChEBI" id="CHEBI:57792"/>
    </ligand>
</feature>
<feature type="binding site" evidence="1">
    <location>
        <position position="213"/>
    </location>
    <ligand>
        <name>1-deoxy-D-xylulose 5-phosphate</name>
        <dbReference type="ChEBI" id="CHEBI:57792"/>
    </ligand>
</feature>
<feature type="binding site" evidence="1">
    <location>
        <position position="214"/>
    </location>
    <ligand>
        <name>1-deoxy-D-xylulose 5-phosphate</name>
        <dbReference type="ChEBI" id="CHEBI:57792"/>
    </ligand>
</feature>
<feature type="binding site" evidence="1">
    <location>
        <position position="217"/>
    </location>
    <ligand>
        <name>1-deoxy-D-xylulose 5-phosphate</name>
        <dbReference type="ChEBI" id="CHEBI:57792"/>
    </ligand>
</feature>
<feature type="binding site" evidence="1">
    <location>
        <position position="217"/>
    </location>
    <ligand>
        <name>Mn(2+)</name>
        <dbReference type="ChEBI" id="CHEBI:29035"/>
    </ligand>
</feature>
<dbReference type="EC" id="1.1.1.267" evidence="1"/>
<dbReference type="EMBL" id="AE017262">
    <property type="protein sequence ID" value="AAT04109.1"/>
    <property type="molecule type" value="Genomic_DNA"/>
</dbReference>
<dbReference type="RefSeq" id="WP_003726414.1">
    <property type="nucleotide sequence ID" value="NC_002973.6"/>
</dbReference>
<dbReference type="SMR" id="Q720A5"/>
<dbReference type="KEGG" id="lmf:LMOf2365_1334"/>
<dbReference type="HOGENOM" id="CLU_035714_4_0_9"/>
<dbReference type="UniPathway" id="UPA00056">
    <property type="reaction ID" value="UER00092"/>
</dbReference>
<dbReference type="GO" id="GO:0030604">
    <property type="term" value="F:1-deoxy-D-xylulose-5-phosphate reductoisomerase activity"/>
    <property type="evidence" value="ECO:0007669"/>
    <property type="project" value="UniProtKB-UniRule"/>
</dbReference>
<dbReference type="GO" id="GO:0030145">
    <property type="term" value="F:manganese ion binding"/>
    <property type="evidence" value="ECO:0007669"/>
    <property type="project" value="TreeGrafter"/>
</dbReference>
<dbReference type="GO" id="GO:0070402">
    <property type="term" value="F:NADPH binding"/>
    <property type="evidence" value="ECO:0007669"/>
    <property type="project" value="InterPro"/>
</dbReference>
<dbReference type="GO" id="GO:0051484">
    <property type="term" value="P:isopentenyl diphosphate biosynthetic process, methylerythritol 4-phosphate pathway involved in terpenoid biosynthetic process"/>
    <property type="evidence" value="ECO:0007669"/>
    <property type="project" value="TreeGrafter"/>
</dbReference>
<dbReference type="FunFam" id="1.10.1740.10:FF:000005">
    <property type="entry name" value="1-deoxy-D-xylulose 5-phosphate reductoisomerase"/>
    <property type="match status" value="1"/>
</dbReference>
<dbReference type="FunFam" id="3.40.50.720:FF:000045">
    <property type="entry name" value="1-deoxy-D-xylulose 5-phosphate reductoisomerase"/>
    <property type="match status" value="1"/>
</dbReference>
<dbReference type="Gene3D" id="1.10.1740.10">
    <property type="match status" value="1"/>
</dbReference>
<dbReference type="Gene3D" id="3.40.50.720">
    <property type="entry name" value="NAD(P)-binding Rossmann-like Domain"/>
    <property type="match status" value="1"/>
</dbReference>
<dbReference type="HAMAP" id="MF_00183">
    <property type="entry name" value="DXP_reductoisom"/>
    <property type="match status" value="1"/>
</dbReference>
<dbReference type="InterPro" id="IPR003821">
    <property type="entry name" value="DXP_reductoisomerase"/>
</dbReference>
<dbReference type="InterPro" id="IPR013644">
    <property type="entry name" value="DXP_reductoisomerase_C"/>
</dbReference>
<dbReference type="InterPro" id="IPR013512">
    <property type="entry name" value="DXP_reductoisomerase_N"/>
</dbReference>
<dbReference type="InterPro" id="IPR026877">
    <property type="entry name" value="DXPR_C"/>
</dbReference>
<dbReference type="InterPro" id="IPR036169">
    <property type="entry name" value="DXPR_C_sf"/>
</dbReference>
<dbReference type="InterPro" id="IPR036291">
    <property type="entry name" value="NAD(P)-bd_dom_sf"/>
</dbReference>
<dbReference type="NCBIfam" id="TIGR00243">
    <property type="entry name" value="Dxr"/>
    <property type="match status" value="1"/>
</dbReference>
<dbReference type="NCBIfam" id="NF009114">
    <property type="entry name" value="PRK12464.1"/>
    <property type="match status" value="1"/>
</dbReference>
<dbReference type="PANTHER" id="PTHR30525">
    <property type="entry name" value="1-DEOXY-D-XYLULOSE 5-PHOSPHATE REDUCTOISOMERASE"/>
    <property type="match status" value="1"/>
</dbReference>
<dbReference type="PANTHER" id="PTHR30525:SF0">
    <property type="entry name" value="1-DEOXY-D-XYLULOSE 5-PHOSPHATE REDUCTOISOMERASE, CHLOROPLASTIC"/>
    <property type="match status" value="1"/>
</dbReference>
<dbReference type="Pfam" id="PF08436">
    <property type="entry name" value="DXP_redisom_C"/>
    <property type="match status" value="1"/>
</dbReference>
<dbReference type="Pfam" id="PF02670">
    <property type="entry name" value="DXP_reductoisom"/>
    <property type="match status" value="1"/>
</dbReference>
<dbReference type="Pfam" id="PF13288">
    <property type="entry name" value="DXPR_C"/>
    <property type="match status" value="1"/>
</dbReference>
<dbReference type="PIRSF" id="PIRSF006205">
    <property type="entry name" value="Dxp_reductismrs"/>
    <property type="match status" value="1"/>
</dbReference>
<dbReference type="SUPFAM" id="SSF69055">
    <property type="entry name" value="1-deoxy-D-xylulose-5-phosphate reductoisomerase, C-terminal domain"/>
    <property type="match status" value="1"/>
</dbReference>
<dbReference type="SUPFAM" id="SSF55347">
    <property type="entry name" value="Glyceraldehyde-3-phosphate dehydrogenase-like, C-terminal domain"/>
    <property type="match status" value="1"/>
</dbReference>
<dbReference type="SUPFAM" id="SSF51735">
    <property type="entry name" value="NAD(P)-binding Rossmann-fold domains"/>
    <property type="match status" value="1"/>
</dbReference>
<proteinExistence type="inferred from homology"/>
<protein>
    <recommendedName>
        <fullName evidence="1">1-deoxy-D-xylulose 5-phosphate reductoisomerase</fullName>
        <shortName evidence="1">DXP reductoisomerase</shortName>
        <ecNumber evidence="1">1.1.1.267</ecNumber>
    </recommendedName>
    <alternativeName>
        <fullName evidence="1">1-deoxyxylulose-5-phosphate reductoisomerase</fullName>
    </alternativeName>
    <alternativeName>
        <fullName evidence="1">2-C-methyl-D-erythritol 4-phosphate synthase</fullName>
    </alternativeName>
</protein>